<reference key="1">
    <citation type="journal article" date="1986" name="J. Gen. Virol.">
        <title>Evolution of vesicular stomatitis virus in athymic nude mice: mutations associated with natural killer cell selection.</title>
        <authorList>
            <person name="Vandepol S.B."/>
            <person name="Holland J.J."/>
        </authorList>
    </citation>
    <scope>NUCLEOTIDE SEQUENCE [GENOMIC RNA]</scope>
</reference>
<reference key="2">
    <citation type="journal article" date="1987" name="J. Virol.">
        <title>Continuing coevolution of virus and defective interfering particles and of viral genome sequences during undiluted passages: virus mutants exhibiting nearly complete resistance to formerly dominant defective interfering particles.</title>
        <authorList>
            <person name="Depolo N.J."/>
            <person name="Giachetti C."/>
            <person name="Holland J.J."/>
        </authorList>
    </citation>
    <scope>NUCLEOTIDE SEQUENCE [GENOMIC RNA]</scope>
</reference>
<comment type="function">
    <text evidence="2">Nonenzymatic cofactor regulating the function and conformation of the RNA polymerase and part of the transcription and replication complex. Binds the viral ribonucleocapsid and positions the L polymerase on the template. Acts as a chaperone for newly synthesized free N protein, so-called N(0). Plays a role in virion assembly.</text>
</comment>
<comment type="subunit">
    <text evidence="2 4">Homodimer (By similarity). Interacts with the L polymerase; the association of P and L forms the polymerase complex and positions P optimally for encapsidation of newly synthesized genomes with the nucleoprotein. Interacts (via N-terminus) with N(0). Interacts (via C-terminus) with N in ribonucleocapsid (via C-terminus); this interaction allows to package the L polymerase in the virion and positions the polymerase on the template, since P acts as a bridge between N and L (By similarity).</text>
</comment>
<comment type="subcellular location">
    <subcellularLocation>
        <location evidence="2">Virion</location>
    </subcellularLocation>
    <subcellularLocation>
        <location evidence="2">Host cytoplasm</location>
    </subcellularLocation>
</comment>
<comment type="domain">
    <text evidence="2">The N-terminus is disordered and is involved in binding N(0). The region of interaction with the L polymerase is necessary for transcription. The hinge region is highly variable. The central domain is involved in oligomerization. The C-terminus is basic and essential for binding the N-RNA template.</text>
</comment>
<comment type="PTM">
    <text evidence="2 3">Phosphorylated in the N-terminus by host CK2 (By similarity). Phosphorylation of the phosphoprotein is required for the transcriptional function of the P-L complex (By similarity).</text>
</comment>
<comment type="similarity">
    <text evidence="6">Belongs to the vesiculovirus protein P family.</text>
</comment>
<dbReference type="EMBL" id="X04453">
    <property type="protein sequence ID" value="CAA28052.1"/>
    <property type="molecule type" value="Genomic_RNA"/>
</dbReference>
<dbReference type="EMBL" id="M15121">
    <property type="protein sequence ID" value="AAA48375.1"/>
    <property type="molecule type" value="Genomic_RNA"/>
</dbReference>
<dbReference type="PIR" id="A26794">
    <property type="entry name" value="MNVNV4"/>
</dbReference>
<dbReference type="SMR" id="P04879"/>
<dbReference type="Proteomes" id="UP000007544">
    <property type="component" value="Genome"/>
</dbReference>
<dbReference type="GO" id="GO:0030430">
    <property type="term" value="C:host cell cytoplasm"/>
    <property type="evidence" value="ECO:0007669"/>
    <property type="project" value="UniProtKB-SubCell"/>
</dbReference>
<dbReference type="GO" id="GO:0044423">
    <property type="term" value="C:virion component"/>
    <property type="evidence" value="ECO:0007669"/>
    <property type="project" value="UniProtKB-KW"/>
</dbReference>
<dbReference type="GO" id="GO:0003968">
    <property type="term" value="F:RNA-directed RNA polymerase activity"/>
    <property type="evidence" value="ECO:0007669"/>
    <property type="project" value="InterPro"/>
</dbReference>
<dbReference type="CDD" id="cd21033">
    <property type="entry name" value="VSV_P-protein-C_like"/>
    <property type="match status" value="1"/>
</dbReference>
<dbReference type="FunFam" id="1.10.8.440:FF:000001">
    <property type="entry name" value="Phosphoprotein"/>
    <property type="match status" value="1"/>
</dbReference>
<dbReference type="Gene3D" id="6.10.140.830">
    <property type="match status" value="1"/>
</dbReference>
<dbReference type="Gene3D" id="1.10.8.440">
    <property type="entry name" value="Vesicular stomatitis virus phosphoprotein C-terminal domain"/>
    <property type="match status" value="1"/>
</dbReference>
<dbReference type="InterPro" id="IPR048220">
    <property type="entry name" value="P-protein-C_vesiculovirus"/>
</dbReference>
<dbReference type="InterPro" id="IPR043036">
    <property type="entry name" value="Phosphoprotein_C_viral"/>
</dbReference>
<dbReference type="InterPro" id="IPR037263">
    <property type="entry name" value="Phosphoprotein_central"/>
</dbReference>
<dbReference type="Pfam" id="PF00922">
    <property type="entry name" value="Phosphoprotein"/>
    <property type="match status" value="1"/>
</dbReference>
<dbReference type="SUPFAM" id="SSF160892">
    <property type="entry name" value="Phosphoprotein oligomerization domain-like"/>
    <property type="match status" value="1"/>
</dbReference>
<gene>
    <name type="primary">P</name>
</gene>
<protein>
    <recommendedName>
        <fullName>Phosphoprotein</fullName>
        <shortName>Protein P</shortName>
    </recommendedName>
    <alternativeName>
        <fullName>Protein M1</fullName>
    </alternativeName>
</protein>
<proteinExistence type="inferred from homology"/>
<organism>
    <name type="scientific">Vesicular stomatitis Indiana virus (strain Glasgow)</name>
    <name type="common">VSIV</name>
    <dbReference type="NCBI Taxonomy" id="11278"/>
    <lineage>
        <taxon>Viruses</taxon>
        <taxon>Riboviria</taxon>
        <taxon>Orthornavirae</taxon>
        <taxon>Negarnaviricota</taxon>
        <taxon>Haploviricotina</taxon>
        <taxon>Monjiviricetes</taxon>
        <taxon>Mononegavirales</taxon>
        <taxon>Rhabdoviridae</taxon>
        <taxon>Alpharhabdovirinae</taxon>
        <taxon>Vesiculovirus</taxon>
        <taxon>Vesiculovirus indiana</taxon>
    </lineage>
</organism>
<keyword id="KW-0143">Chaperone</keyword>
<keyword id="KW-1035">Host cytoplasm</keyword>
<keyword id="KW-0597">Phosphoprotein</keyword>
<keyword id="KW-0693">Viral RNA replication</keyword>
<keyword id="KW-0946">Virion</keyword>
<accession>P04879</accession>
<sequence>MDNLTKVREYLKSYSRLDQAVGEIDEIEAQRAEKSNYELFQEDGVEEHTRPSYFQAADDSDTESEPEIEDNQGLYVPDPEAEQVEGFIQGPLDDYADDDVDVVFTSDWKQPELESDEHGKTLRLTLPEGLSGEQKSQWLSTIKAVVQSAKHWNLAECTFEASGEGVIIKKRQITPDVYKVTPVMNTHPSQSEAVSDVWSLSKTSMTFQPKKASLQPLTVSLDELFSSRGEFISVGGNGRMSHKEAILLGLRYKKLYNQARVKYSL</sequence>
<evidence type="ECO:0000250" key="1"/>
<evidence type="ECO:0000250" key="2">
    <source>
        <dbReference type="UniProtKB" id="P03520"/>
    </source>
</evidence>
<evidence type="ECO:0000250" key="3">
    <source>
        <dbReference type="UniProtKB" id="P04877"/>
    </source>
</evidence>
<evidence type="ECO:0000250" key="4">
    <source>
        <dbReference type="UniProtKB" id="P04880"/>
    </source>
</evidence>
<evidence type="ECO:0000256" key="5">
    <source>
        <dbReference type="SAM" id="MobiDB-lite"/>
    </source>
</evidence>
<evidence type="ECO:0000305" key="6"/>
<feature type="chain" id="PRO_0000222834" description="Phosphoprotein">
    <location>
        <begin position="1"/>
        <end position="265"/>
    </location>
</feature>
<feature type="region of interest" description="Interaction with N(0)" evidence="2">
    <location>
        <begin position="1"/>
        <end position="60"/>
    </location>
</feature>
<feature type="region of interest" description="Disordered" evidence="5">
    <location>
        <begin position="42"/>
        <end position="74"/>
    </location>
</feature>
<feature type="region of interest" description="Interaction with the L polymerase" evidence="2">
    <location>
        <begin position="49"/>
        <end position="105"/>
    </location>
</feature>
<feature type="region of interest" description="Oligomerization" evidence="2">
    <location>
        <begin position="109"/>
        <end position="170"/>
    </location>
</feature>
<feature type="region of interest" description="Hinge" evidence="2">
    <location>
        <begin position="171"/>
        <end position="193"/>
    </location>
</feature>
<feature type="region of interest" description="Interaction with the Nucleoprotein-RNA and template-binding" evidence="3">
    <location>
        <begin position="245"/>
        <end position="265"/>
    </location>
</feature>
<feature type="compositionally biased region" description="Acidic residues" evidence="5">
    <location>
        <begin position="58"/>
        <end position="70"/>
    </location>
</feature>
<feature type="site" description="Involved in oligomerization" evidence="4">
    <location>
        <position position="138"/>
    </location>
</feature>
<feature type="site" description="Involved in oligomerization" evidence="4">
    <location>
        <position position="141"/>
    </location>
</feature>
<feature type="modified residue" description="Phosphotyrosine; by host" evidence="2">
    <location>
        <position position="14"/>
    </location>
</feature>
<feature type="modified residue" description="Phosphoserine; by host CK2" evidence="1">
    <location>
        <position position="60"/>
    </location>
</feature>
<feature type="modified residue" description="Phosphothreonine; by host CK2" evidence="1">
    <location>
        <position position="62"/>
    </location>
</feature>
<feature type="modified residue" description="Phosphoserine; by host CK2" evidence="1">
    <location>
        <position position="64"/>
    </location>
</feature>
<feature type="modified residue" description="Phosphoserine; by host" evidence="4">
    <location>
        <position position="226"/>
    </location>
</feature>
<feature type="modified residue" description="Phosphoserine; by host" evidence="4">
    <location>
        <position position="227"/>
    </location>
</feature>
<feature type="modified residue" description="Phosphoserine" evidence="4">
    <location>
        <position position="233"/>
    </location>
</feature>
<organismHost>
    <name type="scientific">Aedes</name>
    <dbReference type="NCBI Taxonomy" id="7158"/>
</organismHost>
<organismHost>
    <name type="scientific">Bos taurus</name>
    <name type="common">Bovine</name>
    <dbReference type="NCBI Taxonomy" id="9913"/>
</organismHost>
<organismHost>
    <name type="scientific">Culicoides</name>
    <dbReference type="NCBI Taxonomy" id="58271"/>
</organismHost>
<organismHost>
    <name type="scientific">Equus asinus</name>
    <name type="common">Donkey</name>
    <name type="synonym">Equus africanus asinus</name>
    <dbReference type="NCBI Taxonomy" id="9793"/>
</organismHost>
<organismHost>
    <name type="scientific">Equus caballus</name>
    <name type="common">Horse</name>
    <dbReference type="NCBI Taxonomy" id="9796"/>
</organismHost>
<organismHost>
    <name type="scientific">Homo sapiens</name>
    <name type="common">Human</name>
    <dbReference type="NCBI Taxonomy" id="9606"/>
</organismHost>
<organismHost>
    <name type="scientific">Lutzomyia</name>
    <dbReference type="NCBI Taxonomy" id="252607"/>
</organismHost>
<organismHost>
    <name type="scientific">Musca domestica</name>
    <name type="common">House fly</name>
    <dbReference type="NCBI Taxonomy" id="7370"/>
</organismHost>
<organismHost>
    <name type="scientific">Simuliidae</name>
    <name type="common">black flies</name>
    <dbReference type="NCBI Taxonomy" id="7190"/>
</organismHost>
<organismHost>
    <name type="scientific">Sus scrofa</name>
    <name type="common">Pig</name>
    <dbReference type="NCBI Taxonomy" id="9823"/>
</organismHost>
<name>PHOSP_VSIVG</name>